<name>PUR8_STAA3</name>
<dbReference type="EC" id="4.3.2.2" evidence="2"/>
<dbReference type="EMBL" id="CP000255">
    <property type="protein sequence ID" value="ABD20399.1"/>
    <property type="molecule type" value="Genomic_DNA"/>
</dbReference>
<dbReference type="RefSeq" id="WP_000572878.1">
    <property type="nucleotide sequence ID" value="NZ_CP027476.1"/>
</dbReference>
<dbReference type="SMR" id="Q2FFI7"/>
<dbReference type="KEGG" id="saa:SAUSA300_1889"/>
<dbReference type="HOGENOM" id="CLU_030949_0_1_9"/>
<dbReference type="OMA" id="VQENAMK"/>
<dbReference type="UniPathway" id="UPA00074">
    <property type="reaction ID" value="UER00132"/>
</dbReference>
<dbReference type="UniPathway" id="UPA00075">
    <property type="reaction ID" value="UER00336"/>
</dbReference>
<dbReference type="PHI-base" id="PHI:7345"/>
<dbReference type="Proteomes" id="UP000001939">
    <property type="component" value="Chromosome"/>
</dbReference>
<dbReference type="GO" id="GO:0005829">
    <property type="term" value="C:cytosol"/>
    <property type="evidence" value="ECO:0007669"/>
    <property type="project" value="TreeGrafter"/>
</dbReference>
<dbReference type="GO" id="GO:0070626">
    <property type="term" value="F:(S)-2-(5-amino-1-(5-phospho-D-ribosyl)imidazole-4-carboxamido) succinate lyase (fumarate-forming) activity"/>
    <property type="evidence" value="ECO:0007669"/>
    <property type="project" value="TreeGrafter"/>
</dbReference>
<dbReference type="GO" id="GO:0004018">
    <property type="term" value="F:N6-(1,2-dicarboxyethyl)AMP AMP-lyase (fumarate-forming) activity"/>
    <property type="evidence" value="ECO:0007669"/>
    <property type="project" value="InterPro"/>
</dbReference>
<dbReference type="GO" id="GO:0044208">
    <property type="term" value="P:'de novo' AMP biosynthetic process"/>
    <property type="evidence" value="ECO:0007669"/>
    <property type="project" value="UniProtKB-UniPathway"/>
</dbReference>
<dbReference type="GO" id="GO:0006189">
    <property type="term" value="P:'de novo' IMP biosynthetic process"/>
    <property type="evidence" value="ECO:0007669"/>
    <property type="project" value="UniProtKB-UniPathway"/>
</dbReference>
<dbReference type="CDD" id="cd01360">
    <property type="entry name" value="Adenylsuccinate_lyase_1"/>
    <property type="match status" value="1"/>
</dbReference>
<dbReference type="FunFam" id="1.10.275.10:FF:000006">
    <property type="entry name" value="Adenylosuccinate lyase"/>
    <property type="match status" value="1"/>
</dbReference>
<dbReference type="FunFam" id="1.10.40.30:FF:000007">
    <property type="entry name" value="Adenylosuccinate lyase"/>
    <property type="match status" value="1"/>
</dbReference>
<dbReference type="FunFam" id="1.20.200.10:FF:000008">
    <property type="entry name" value="Adenylosuccinate lyase"/>
    <property type="match status" value="1"/>
</dbReference>
<dbReference type="Gene3D" id="1.10.40.30">
    <property type="entry name" value="Fumarase/aspartase (C-terminal domain)"/>
    <property type="match status" value="1"/>
</dbReference>
<dbReference type="Gene3D" id="1.20.200.10">
    <property type="entry name" value="Fumarase/aspartase (Central domain)"/>
    <property type="match status" value="1"/>
</dbReference>
<dbReference type="Gene3D" id="1.10.275.10">
    <property type="entry name" value="Fumarase/aspartase (N-terminal domain)"/>
    <property type="match status" value="1"/>
</dbReference>
<dbReference type="InterPro" id="IPR019468">
    <property type="entry name" value="AdenyloSucc_lyase_C"/>
</dbReference>
<dbReference type="InterPro" id="IPR024083">
    <property type="entry name" value="Fumarase/histidase_N"/>
</dbReference>
<dbReference type="InterPro" id="IPR020557">
    <property type="entry name" value="Fumarate_lyase_CS"/>
</dbReference>
<dbReference type="InterPro" id="IPR000362">
    <property type="entry name" value="Fumarate_lyase_fam"/>
</dbReference>
<dbReference type="InterPro" id="IPR022761">
    <property type="entry name" value="Fumarate_lyase_N"/>
</dbReference>
<dbReference type="InterPro" id="IPR008948">
    <property type="entry name" value="L-Aspartase-like"/>
</dbReference>
<dbReference type="InterPro" id="IPR004769">
    <property type="entry name" value="Pur_lyase"/>
</dbReference>
<dbReference type="NCBIfam" id="TIGR00928">
    <property type="entry name" value="purB"/>
    <property type="match status" value="1"/>
</dbReference>
<dbReference type="PANTHER" id="PTHR43172">
    <property type="entry name" value="ADENYLOSUCCINATE LYASE"/>
    <property type="match status" value="1"/>
</dbReference>
<dbReference type="PANTHER" id="PTHR43172:SF1">
    <property type="entry name" value="ADENYLOSUCCINATE LYASE"/>
    <property type="match status" value="1"/>
</dbReference>
<dbReference type="Pfam" id="PF10397">
    <property type="entry name" value="ADSL_C"/>
    <property type="match status" value="1"/>
</dbReference>
<dbReference type="Pfam" id="PF00206">
    <property type="entry name" value="Lyase_1"/>
    <property type="match status" value="1"/>
</dbReference>
<dbReference type="PRINTS" id="PR00145">
    <property type="entry name" value="ARGSUCLYASE"/>
</dbReference>
<dbReference type="PRINTS" id="PR00149">
    <property type="entry name" value="FUMRATELYASE"/>
</dbReference>
<dbReference type="SMART" id="SM00998">
    <property type="entry name" value="ADSL_C"/>
    <property type="match status" value="1"/>
</dbReference>
<dbReference type="SUPFAM" id="SSF48557">
    <property type="entry name" value="L-aspartase-like"/>
    <property type="match status" value="1"/>
</dbReference>
<dbReference type="PROSITE" id="PS00163">
    <property type="entry name" value="FUMARATE_LYASES"/>
    <property type="match status" value="1"/>
</dbReference>
<proteinExistence type="inferred from homology"/>
<feature type="chain" id="PRO_0000259981" description="Adenylosuccinate lyase">
    <location>
        <begin position="1"/>
        <end position="431"/>
    </location>
</feature>
<feature type="active site" description="Proton donor/acceptor" evidence="2">
    <location>
        <position position="141"/>
    </location>
</feature>
<feature type="active site" description="Proton donor/acceptor" evidence="2">
    <location>
        <position position="262"/>
    </location>
</feature>
<feature type="binding site" evidence="2">
    <location>
        <begin position="4"/>
        <end position="5"/>
    </location>
    <ligand>
        <name>N(6)-(1,2-dicarboxyethyl)-AMP</name>
        <dbReference type="ChEBI" id="CHEBI:57567"/>
    </ligand>
</feature>
<feature type="binding site" evidence="2">
    <location>
        <begin position="67"/>
        <end position="69"/>
    </location>
    <ligand>
        <name>N(6)-(1,2-dicarboxyethyl)-AMP</name>
        <dbReference type="ChEBI" id="CHEBI:57567"/>
    </ligand>
</feature>
<feature type="binding site" evidence="2">
    <location>
        <begin position="93"/>
        <end position="94"/>
    </location>
    <ligand>
        <name>N(6)-(1,2-dicarboxyethyl)-AMP</name>
        <dbReference type="ChEBI" id="CHEBI:57567"/>
    </ligand>
</feature>
<feature type="binding site" evidence="2">
    <location>
        <position position="212"/>
    </location>
    <ligand>
        <name>N(6)-(1,2-dicarboxyethyl)-AMP</name>
        <dbReference type="ChEBI" id="CHEBI:57567"/>
    </ligand>
</feature>
<feature type="binding site" evidence="2">
    <location>
        <position position="263"/>
    </location>
    <ligand>
        <name>N(6)-(1,2-dicarboxyethyl)-AMP</name>
        <dbReference type="ChEBI" id="CHEBI:57567"/>
    </ligand>
</feature>
<feature type="binding site" evidence="2">
    <location>
        <begin position="268"/>
        <end position="270"/>
    </location>
    <ligand>
        <name>N(6)-(1,2-dicarboxyethyl)-AMP</name>
        <dbReference type="ChEBI" id="CHEBI:57567"/>
    </ligand>
</feature>
<feature type="binding site" evidence="2">
    <location>
        <position position="276"/>
    </location>
    <ligand>
        <name>N(6)-(1,2-dicarboxyethyl)-AMP</name>
        <dbReference type="ChEBI" id="CHEBI:57567"/>
    </ligand>
</feature>
<feature type="binding site" evidence="2">
    <location>
        <begin position="307"/>
        <end position="311"/>
    </location>
    <ligand>
        <name>N(6)-(1,2-dicarboxyethyl)-AMP</name>
        <dbReference type="ChEBI" id="CHEBI:57567"/>
    </ligand>
</feature>
<evidence type="ECO:0000250" key="1"/>
<evidence type="ECO:0000250" key="2">
    <source>
        <dbReference type="UniProtKB" id="P0AB89"/>
    </source>
</evidence>
<evidence type="ECO:0000305" key="3"/>
<protein>
    <recommendedName>
        <fullName>Adenylosuccinate lyase</fullName>
        <shortName>ASL</shortName>
        <ecNumber evidence="2">4.3.2.2</ecNumber>
    </recommendedName>
    <alternativeName>
        <fullName>Adenylosuccinase</fullName>
        <shortName>ASase</shortName>
    </alternativeName>
</protein>
<accession>Q2FFI7</accession>
<reference key="1">
    <citation type="journal article" date="2006" name="Lancet">
        <title>Complete genome sequence of USA300, an epidemic clone of community-acquired meticillin-resistant Staphylococcus aureus.</title>
        <authorList>
            <person name="Diep B.A."/>
            <person name="Gill S.R."/>
            <person name="Chang R.F."/>
            <person name="Phan T.H."/>
            <person name="Chen J.H."/>
            <person name="Davidson M.G."/>
            <person name="Lin F."/>
            <person name="Lin J."/>
            <person name="Carleton H.A."/>
            <person name="Mongodin E.F."/>
            <person name="Sensabaugh G.F."/>
            <person name="Perdreau-Remington F."/>
        </authorList>
    </citation>
    <scope>NUCLEOTIDE SEQUENCE [LARGE SCALE GENOMIC DNA]</scope>
    <source>
        <strain>USA300</strain>
    </source>
</reference>
<organism>
    <name type="scientific">Staphylococcus aureus (strain USA300)</name>
    <dbReference type="NCBI Taxonomy" id="367830"/>
    <lineage>
        <taxon>Bacteria</taxon>
        <taxon>Bacillati</taxon>
        <taxon>Bacillota</taxon>
        <taxon>Bacilli</taxon>
        <taxon>Bacillales</taxon>
        <taxon>Staphylococcaceae</taxon>
        <taxon>Staphylococcus</taxon>
    </lineage>
</organism>
<gene>
    <name type="primary">purB</name>
    <name type="ordered locus">SAUSA300_1889</name>
</gene>
<comment type="function">
    <text evidence="2">Catalyzes two reactions in de novo purine nucleotide biosynthesis. Catalyzes the breakdown of 5-aminoimidazole- (N-succinylocarboxamide) ribotide (SAICAR or 2-[5-amino-1-(5-phospho-beta-D-ribosyl)imidazole-4-carboxamido]succinate) to 5-aminoimidazole-4-carboxamide ribotide (AICAR or 5-amino-1-(5-phospho-beta-D-ribosyl)imidazole-4-carboxamide) and fumarate, and of adenylosuccinate (ADS or N(6)-(1,2-dicarboxyethyl)-AMP) to adenosine monophosphate (AMP) and fumarate.</text>
</comment>
<comment type="catalytic activity">
    <reaction evidence="2">
        <text>N(6)-(1,2-dicarboxyethyl)-AMP = fumarate + AMP</text>
        <dbReference type="Rhea" id="RHEA:16853"/>
        <dbReference type="ChEBI" id="CHEBI:29806"/>
        <dbReference type="ChEBI" id="CHEBI:57567"/>
        <dbReference type="ChEBI" id="CHEBI:456215"/>
        <dbReference type="EC" id="4.3.2.2"/>
    </reaction>
    <physiologicalReaction direction="left-to-right" evidence="2">
        <dbReference type="Rhea" id="RHEA:16854"/>
    </physiologicalReaction>
</comment>
<comment type="catalytic activity">
    <reaction evidence="2">
        <text>(2S)-2-[5-amino-1-(5-phospho-beta-D-ribosyl)imidazole-4-carboxamido]succinate = 5-amino-1-(5-phospho-beta-D-ribosyl)imidazole-4-carboxamide + fumarate</text>
        <dbReference type="Rhea" id="RHEA:23920"/>
        <dbReference type="ChEBI" id="CHEBI:29806"/>
        <dbReference type="ChEBI" id="CHEBI:58443"/>
        <dbReference type="ChEBI" id="CHEBI:58475"/>
        <dbReference type="EC" id="4.3.2.2"/>
    </reaction>
    <physiologicalReaction direction="left-to-right" evidence="2">
        <dbReference type="Rhea" id="RHEA:23921"/>
    </physiologicalReaction>
</comment>
<comment type="pathway">
    <text>Purine metabolism; AMP biosynthesis via de novo pathway; AMP from IMP: step 2/2.</text>
</comment>
<comment type="pathway">
    <text>Purine metabolism; IMP biosynthesis via de novo pathway; 5-amino-1-(5-phospho-D-ribosyl)imidazole-4-carboxamide from 5-amino-1-(5-phospho-D-ribosyl)imidazole-4-carboxylate: step 2/2.</text>
</comment>
<comment type="subunit">
    <text evidence="1">Homodimer and homotetramer. Residues from neighboring subunits contribute catalytic and substrate-binding residues to each active site (By similarity).</text>
</comment>
<comment type="similarity">
    <text evidence="3">Belongs to the lyase 1 family. Adenylosuccinate lyase subfamily.</text>
</comment>
<sequence>MIERYSREEMSNIWTDQNRYEAWLEVEILACEAWSELGHIPKADVQKIRQNAKVNVERAQEIEQETRHDVVAFTRQVSETLGEERKWVHYGLTSTDVVDTALSFVIKQANDIIEKDLERFIDVLAEKAKNYKYTLMMGRTHGVHAEPTTFGVKMALWYTEMQRNLQRFKQVREEIEVGKMSGAVGTFANIPPEIESYVCKHLGIGTAPVSTQTLQRDRHAYYIATLALIATSLEKFAVEIRNLQKTETREVEEAFAKGQKGSSAMPHKRNPIGSENITGISRVIRGYITTAYENVPLWHERDISHSSAERIMLPDVTIALDYALNRFTNIVDRLTVFEDNMRNNIDKTFGLIFSQRVLLALINKGMVREEAYDKVQPKAMISWETKTPFRELIEQDESITSVLTKEELDECFDPKHHLNQVDTIFERAGLA</sequence>
<keyword id="KW-0456">Lyase</keyword>
<keyword id="KW-0658">Purine biosynthesis</keyword>